<feature type="chain" id="PRO_0000197971" description="Protein ApaG">
    <location>
        <begin position="1"/>
        <end position="127"/>
    </location>
</feature>
<feature type="domain" description="ApaG" evidence="1">
    <location>
        <begin position="3"/>
        <end position="127"/>
    </location>
</feature>
<organism>
    <name type="scientific">Xanthomonas campestris pv. campestris (strain ATCC 33913 / DSM 3586 / NCPPB 528 / LMG 568 / P 25)</name>
    <dbReference type="NCBI Taxonomy" id="190485"/>
    <lineage>
        <taxon>Bacteria</taxon>
        <taxon>Pseudomonadati</taxon>
        <taxon>Pseudomonadota</taxon>
        <taxon>Gammaproteobacteria</taxon>
        <taxon>Lysobacterales</taxon>
        <taxon>Lysobacteraceae</taxon>
        <taxon>Xanthomonas</taxon>
    </lineage>
</organism>
<sequence>MQDDPRYRVEVEVSPRFLAHQSTPEEGRYAFAYSIRIQNAGAVPARLIARHWKITDANGRTEQVDGEGVVGEQPRLRPGEAFHYTSGVLLETEQGQMQGYYDMVADDGTEFTAPIAAFVLSVPRTLH</sequence>
<dbReference type="EMBL" id="AE008922">
    <property type="protein sequence ID" value="AAM40105.1"/>
    <property type="molecule type" value="Genomic_DNA"/>
</dbReference>
<dbReference type="RefSeq" id="NP_636181.1">
    <property type="nucleotide sequence ID" value="NC_003902.1"/>
</dbReference>
<dbReference type="RefSeq" id="WP_011036026.1">
    <property type="nucleotide sequence ID" value="NC_003902.1"/>
</dbReference>
<dbReference type="SMR" id="Q8PCE4"/>
<dbReference type="STRING" id="190485.XCC0790"/>
<dbReference type="EnsemblBacteria" id="AAM40105">
    <property type="protein sequence ID" value="AAM40105"/>
    <property type="gene ID" value="XCC0790"/>
</dbReference>
<dbReference type="GeneID" id="58014635"/>
<dbReference type="KEGG" id="xcc:XCC0790"/>
<dbReference type="PATRIC" id="fig|190485.4.peg.860"/>
<dbReference type="eggNOG" id="COG2967">
    <property type="taxonomic scope" value="Bacteria"/>
</dbReference>
<dbReference type="HOGENOM" id="CLU_128074_1_0_6"/>
<dbReference type="OrthoDB" id="9795226at2"/>
<dbReference type="Proteomes" id="UP000001010">
    <property type="component" value="Chromosome"/>
</dbReference>
<dbReference type="GO" id="GO:0070987">
    <property type="term" value="P:error-free translesion synthesis"/>
    <property type="evidence" value="ECO:0000318"/>
    <property type="project" value="GO_Central"/>
</dbReference>
<dbReference type="Gene3D" id="2.60.40.1470">
    <property type="entry name" value="ApaG domain"/>
    <property type="match status" value="1"/>
</dbReference>
<dbReference type="HAMAP" id="MF_00791">
    <property type="entry name" value="ApaG"/>
    <property type="match status" value="1"/>
</dbReference>
<dbReference type="InterPro" id="IPR007474">
    <property type="entry name" value="ApaG_domain"/>
</dbReference>
<dbReference type="InterPro" id="IPR036767">
    <property type="entry name" value="ApaG_sf"/>
</dbReference>
<dbReference type="InterPro" id="IPR023065">
    <property type="entry name" value="Uncharacterised_ApaG"/>
</dbReference>
<dbReference type="NCBIfam" id="NF003967">
    <property type="entry name" value="PRK05461.1"/>
    <property type="match status" value="1"/>
</dbReference>
<dbReference type="PANTHER" id="PTHR14289">
    <property type="entry name" value="F-BOX ONLY PROTEIN 3"/>
    <property type="match status" value="1"/>
</dbReference>
<dbReference type="PANTHER" id="PTHR14289:SF16">
    <property type="entry name" value="POLYMERASE DELTA-INTERACTING PROTEIN 2"/>
    <property type="match status" value="1"/>
</dbReference>
<dbReference type="Pfam" id="PF04379">
    <property type="entry name" value="DUF525"/>
    <property type="match status" value="1"/>
</dbReference>
<dbReference type="SUPFAM" id="SSF110069">
    <property type="entry name" value="ApaG-like"/>
    <property type="match status" value="1"/>
</dbReference>
<dbReference type="PROSITE" id="PS51087">
    <property type="entry name" value="APAG"/>
    <property type="match status" value="1"/>
</dbReference>
<name>APAG_XANCP</name>
<protein>
    <recommendedName>
        <fullName evidence="1">Protein ApaG</fullName>
    </recommendedName>
</protein>
<evidence type="ECO:0000255" key="1">
    <source>
        <dbReference type="HAMAP-Rule" id="MF_00791"/>
    </source>
</evidence>
<proteinExistence type="inferred from homology"/>
<gene>
    <name evidence="1" type="primary">apaG</name>
    <name type="ordered locus">XCC0790</name>
</gene>
<keyword id="KW-1185">Reference proteome</keyword>
<accession>Q8PCE4</accession>
<reference key="1">
    <citation type="journal article" date="2002" name="Nature">
        <title>Comparison of the genomes of two Xanthomonas pathogens with differing host specificities.</title>
        <authorList>
            <person name="da Silva A.C.R."/>
            <person name="Ferro J.A."/>
            <person name="Reinach F.C."/>
            <person name="Farah C.S."/>
            <person name="Furlan L.R."/>
            <person name="Quaggio R.B."/>
            <person name="Monteiro-Vitorello C.B."/>
            <person name="Van Sluys M.A."/>
            <person name="Almeida N.F. Jr."/>
            <person name="Alves L.M.C."/>
            <person name="do Amaral A.M."/>
            <person name="Bertolini M.C."/>
            <person name="Camargo L.E.A."/>
            <person name="Camarotte G."/>
            <person name="Cannavan F."/>
            <person name="Cardozo J."/>
            <person name="Chambergo F."/>
            <person name="Ciapina L.P."/>
            <person name="Cicarelli R.M.B."/>
            <person name="Coutinho L.L."/>
            <person name="Cursino-Santos J.R."/>
            <person name="El-Dorry H."/>
            <person name="Faria J.B."/>
            <person name="Ferreira A.J.S."/>
            <person name="Ferreira R.C.C."/>
            <person name="Ferro M.I.T."/>
            <person name="Formighieri E.F."/>
            <person name="Franco M.C."/>
            <person name="Greggio C.C."/>
            <person name="Gruber A."/>
            <person name="Katsuyama A.M."/>
            <person name="Kishi L.T."/>
            <person name="Leite R.P."/>
            <person name="Lemos E.G.M."/>
            <person name="Lemos M.V.F."/>
            <person name="Locali E.C."/>
            <person name="Machado M.A."/>
            <person name="Madeira A.M.B.N."/>
            <person name="Martinez-Rossi N.M."/>
            <person name="Martins E.C."/>
            <person name="Meidanis J."/>
            <person name="Menck C.F.M."/>
            <person name="Miyaki C.Y."/>
            <person name="Moon D.H."/>
            <person name="Moreira L.M."/>
            <person name="Novo M.T.M."/>
            <person name="Okura V.K."/>
            <person name="Oliveira M.C."/>
            <person name="Oliveira V.R."/>
            <person name="Pereira H.A."/>
            <person name="Rossi A."/>
            <person name="Sena J.A.D."/>
            <person name="Silva C."/>
            <person name="de Souza R.F."/>
            <person name="Spinola L.A.F."/>
            <person name="Takita M.A."/>
            <person name="Tamura R.E."/>
            <person name="Teixeira E.C."/>
            <person name="Tezza R.I.D."/>
            <person name="Trindade dos Santos M."/>
            <person name="Truffi D."/>
            <person name="Tsai S.M."/>
            <person name="White F.F."/>
            <person name="Setubal J.C."/>
            <person name="Kitajima J.P."/>
        </authorList>
    </citation>
    <scope>NUCLEOTIDE SEQUENCE [LARGE SCALE GENOMIC DNA]</scope>
    <source>
        <strain>ATCC 33913 / DSM 3586 / NCPPB 528 / LMG 568 / P 25</strain>
    </source>
</reference>